<gene>
    <name type="primary">Dsc3</name>
</gene>
<name>DSC3_MOUSE</name>
<organism>
    <name type="scientific">Mus musculus</name>
    <name type="common">Mouse</name>
    <dbReference type="NCBI Taxonomy" id="10090"/>
    <lineage>
        <taxon>Eukaryota</taxon>
        <taxon>Metazoa</taxon>
        <taxon>Chordata</taxon>
        <taxon>Craniata</taxon>
        <taxon>Vertebrata</taxon>
        <taxon>Euteleostomi</taxon>
        <taxon>Mammalia</taxon>
        <taxon>Eutheria</taxon>
        <taxon>Euarchontoglires</taxon>
        <taxon>Glires</taxon>
        <taxon>Rodentia</taxon>
        <taxon>Myomorpha</taxon>
        <taxon>Muroidea</taxon>
        <taxon>Muridae</taxon>
        <taxon>Murinae</taxon>
        <taxon>Mus</taxon>
        <taxon>Mus</taxon>
    </lineage>
</organism>
<feature type="signal peptide" evidence="3">
    <location>
        <begin position="1"/>
        <end position="31"/>
    </location>
</feature>
<feature type="propeptide" id="PRO_0000003877" evidence="3">
    <location>
        <begin position="32"/>
        <end position="135"/>
    </location>
</feature>
<feature type="chain" id="PRO_0000003878" description="Desmocollin-3">
    <location>
        <begin position="136"/>
        <end position="896"/>
    </location>
</feature>
<feature type="topological domain" description="Extracellular" evidence="3">
    <location>
        <begin position="136"/>
        <end position="695"/>
    </location>
</feature>
<feature type="transmembrane region" description="Helical" evidence="3">
    <location>
        <begin position="696"/>
        <end position="716"/>
    </location>
</feature>
<feature type="topological domain" description="Cytoplasmic" evidence="3">
    <location>
        <begin position="717"/>
        <end position="896"/>
    </location>
</feature>
<feature type="domain" description="Cadherin 1" evidence="4">
    <location>
        <begin position="136"/>
        <end position="243"/>
    </location>
</feature>
<feature type="domain" description="Cadherin 2" evidence="4">
    <location>
        <begin position="244"/>
        <end position="355"/>
    </location>
</feature>
<feature type="domain" description="Cadherin 3" evidence="4">
    <location>
        <begin position="356"/>
        <end position="472"/>
    </location>
</feature>
<feature type="domain" description="Cadherin 4" evidence="4">
    <location>
        <begin position="473"/>
        <end position="580"/>
    </location>
</feature>
<feature type="domain" description="Cadherin 5" evidence="4">
    <location>
        <begin position="581"/>
        <end position="691"/>
    </location>
</feature>
<feature type="glycosylation site" description="N-linked (GlcNAc...) asparagine" evidence="3">
    <location>
        <position position="166"/>
    </location>
</feature>
<feature type="glycosylation site" description="N-linked (GlcNAc...) asparagine" evidence="3">
    <location>
        <position position="392"/>
    </location>
</feature>
<feature type="glycosylation site" description="N-linked (GlcNAc...) asparagine" evidence="3">
    <location>
        <position position="547"/>
    </location>
</feature>
<feature type="glycosylation site" description="N-linked (GlcNAc...) (high mannose) asparagine" evidence="5">
    <location>
        <position position="630"/>
    </location>
</feature>
<feature type="splice variant" id="VSP_000665" description="In isoform 3B." evidence="11">
    <original>KLHVCNQN</original>
    <variation>DSIRGHTG</variation>
    <location>
        <begin position="832"/>
        <end position="839"/>
    </location>
</feature>
<feature type="splice variant" id="VSP_000666" description="In isoform 3B." evidence="11">
    <location>
        <begin position="840"/>
        <end position="896"/>
    </location>
</feature>
<feature type="sequence conflict" description="In Ref. 1; CAA72045." evidence="11" ref="1">
    <original>A</original>
    <variation>V</variation>
    <location>
        <position position="45"/>
    </location>
</feature>
<feature type="sequence conflict" description="In Ref. 1; CAA72045." evidence="11" ref="1">
    <original>I</original>
    <variation>T</variation>
    <location>
        <position position="435"/>
    </location>
</feature>
<feature type="sequence conflict" description="In Ref. 1; CAA72045." evidence="11" ref="1">
    <original>M</original>
    <variation>I</variation>
    <location>
        <position position="539"/>
    </location>
</feature>
<feature type="sequence conflict" description="In Ref. 1; CAA72045." evidence="11" ref="1">
    <original>L</original>
    <variation>I</variation>
    <location>
        <position position="626"/>
    </location>
</feature>
<feature type="sequence conflict" description="In Ref. 1; CAA72045." evidence="11" ref="1">
    <original>I</original>
    <variation>Y</variation>
    <location>
        <position position="694"/>
    </location>
</feature>
<feature type="sequence conflict" description="In Ref. 4; CAA03996." evidence="11" ref="4">
    <original>V</original>
    <variation>I</variation>
    <location>
        <position position="715"/>
    </location>
</feature>
<feature type="sequence conflict" description="In Ref. 1; CAA72045 and 4; CAA03996." evidence="11" ref="1 4">
    <original>QQ</original>
    <variation>HE</variation>
    <location>
        <begin position="730"/>
        <end position="731"/>
    </location>
</feature>
<feature type="sequence conflict" description="In Ref. 1; CAA72045." evidence="11" ref="1">
    <original>D</original>
    <variation>N</variation>
    <location>
        <position position="841"/>
    </location>
</feature>
<feature type="sequence conflict" description="In Ref. 1; CAA72045." evidence="11" ref="1">
    <original>E</original>
    <variation>K</variation>
    <location>
        <position position="891"/>
    </location>
</feature>
<evidence type="ECO:0000250" key="1"/>
<evidence type="ECO:0000250" key="2">
    <source>
        <dbReference type="UniProtKB" id="Q14574"/>
    </source>
</evidence>
<evidence type="ECO:0000255" key="3"/>
<evidence type="ECO:0000255" key="4">
    <source>
        <dbReference type="PROSITE-ProRule" id="PRU00043"/>
    </source>
</evidence>
<evidence type="ECO:0000269" key="5">
    <source>
    </source>
</evidence>
<evidence type="ECO:0000269" key="6">
    <source>
    </source>
</evidence>
<evidence type="ECO:0000269" key="7">
    <source>
    </source>
</evidence>
<evidence type="ECO:0000269" key="8">
    <source>
    </source>
</evidence>
<evidence type="ECO:0000269" key="9">
    <source>
    </source>
</evidence>
<evidence type="ECO:0000269" key="10">
    <source>
    </source>
</evidence>
<evidence type="ECO:0000305" key="11"/>
<reference key="1">
    <citation type="journal article" date="1997" name="Dev. Dyn.">
        <title>Changing pattern of desmocollin 3 expression accompanies epidermal organisation during skin development.</title>
        <authorList>
            <person name="Chidgey M.A.J."/>
            <person name="Yue K.K.M."/>
            <person name="Gould S."/>
            <person name="Byrne C."/>
            <person name="Garrod D.R."/>
        </authorList>
    </citation>
    <scope>NUCLEOTIDE SEQUENCE [MRNA]</scope>
    <scope>TISSUE SPECIFICITY</scope>
    <scope>DEVELOPMENTAL STAGE</scope>
</reference>
<reference key="2">
    <citation type="journal article" date="2009" name="PLoS Biol.">
        <title>Lineage-specific biology revealed by a finished genome assembly of the mouse.</title>
        <authorList>
            <person name="Church D.M."/>
            <person name="Goodstadt L."/>
            <person name="Hillier L.W."/>
            <person name="Zody M.C."/>
            <person name="Goldstein S."/>
            <person name="She X."/>
            <person name="Bult C.J."/>
            <person name="Agarwala R."/>
            <person name="Cherry J.L."/>
            <person name="DiCuccio M."/>
            <person name="Hlavina W."/>
            <person name="Kapustin Y."/>
            <person name="Meric P."/>
            <person name="Maglott D."/>
            <person name="Birtle Z."/>
            <person name="Marques A.C."/>
            <person name="Graves T."/>
            <person name="Zhou S."/>
            <person name="Teague B."/>
            <person name="Potamousis K."/>
            <person name="Churas C."/>
            <person name="Place M."/>
            <person name="Herschleb J."/>
            <person name="Runnheim R."/>
            <person name="Forrest D."/>
            <person name="Amos-Landgraf J."/>
            <person name="Schwartz D.C."/>
            <person name="Cheng Z."/>
            <person name="Lindblad-Toh K."/>
            <person name="Eichler E.E."/>
            <person name="Ponting C.P."/>
        </authorList>
    </citation>
    <scope>NUCLEOTIDE SEQUENCE [LARGE SCALE GENOMIC DNA]</scope>
    <source>
        <strain>C57BL/6J</strain>
    </source>
</reference>
<reference key="3">
    <citation type="submission" date="2005-07" db="EMBL/GenBank/DDBJ databases">
        <authorList>
            <person name="Mural R.J."/>
            <person name="Adams M.D."/>
            <person name="Myers E.W."/>
            <person name="Smith H.O."/>
            <person name="Venter J.C."/>
        </authorList>
    </citation>
    <scope>NUCLEOTIDE SEQUENCE [LARGE SCALE GENOMIC DNA]</scope>
</reference>
<reference key="4">
    <citation type="journal article" date="1997" name="Differentiation">
        <title>Hierarchical expression of desmosomal cadherins during stratified epithelial morphogenesis in the mouse.</title>
        <authorList>
            <person name="King I.A."/>
            <person name="Angst B.D."/>
            <person name="Hunt D.M."/>
            <person name="Kruger M."/>
            <person name="Arnemann J."/>
            <person name="Buxton R.S."/>
        </authorList>
    </citation>
    <scope>NUCLEOTIDE SEQUENCE [MRNA] OF 709-874</scope>
    <scope>ALTERNATIVE SPLICING</scope>
    <scope>DEVELOPMENTAL STAGE</scope>
</reference>
<reference key="5">
    <citation type="journal article" date="2005" name="Mol. Cell. Proteomics">
        <title>High throughput quantitative glycomics and glycoform-focused proteomics of murine dermis and epidermis.</title>
        <authorList>
            <person name="Uematsu R."/>
            <person name="Furukawa J."/>
            <person name="Nakagawa H."/>
            <person name="Shinohara Y."/>
            <person name="Deguchi K."/>
            <person name="Monde K."/>
            <person name="Nishimura S."/>
        </authorList>
    </citation>
    <scope>GLYCOSYLATION [LARGE SCALE ANALYSIS] AT ASN-630</scope>
    <source>
        <tissue>Epidermis</tissue>
    </source>
</reference>
<reference key="6">
    <citation type="journal article" date="2006" name="J. Cell Sci.">
        <title>Desmocollin 3 is required for pre-implantation development of the mouse embryo.</title>
        <authorList>
            <person name="Den Z."/>
            <person name="Cheng X."/>
            <person name="Merched-Sauvage M."/>
            <person name="Koch P.J."/>
        </authorList>
    </citation>
    <scope>FUNCTION</scope>
    <scope>SUBCELLULAR LOCATION</scope>
    <scope>DEVELOPMENTAL STAGE</scope>
    <scope>DISRUPTION PHENOTYPE</scope>
</reference>
<reference key="7">
    <citation type="journal article" date="2008" name="J. Cell Sci.">
        <title>Loss of desmocollin 3 in mice leads to epidermal blistering.</title>
        <authorList>
            <person name="Chen J."/>
            <person name="Den Z."/>
            <person name="Koch P.J."/>
        </authorList>
    </citation>
    <scope>FUNCTION</scope>
    <scope>TISSUE SPECIFICITY</scope>
    <scope>DISRUPTION PHENOTYPE</scope>
</reference>
<reference key="8">
    <citation type="journal article" date="2024" name="Kidney Int.">
        <title>The role of desmoglein-2 in kidney disease.</title>
        <authorList>
            <person name="Xu T."/>
            <person name="Herkens L."/>
            <person name="Jia T."/>
            <person name="Klinkhammer B.M."/>
            <person name="Kant S."/>
            <person name="Krusche C.A."/>
            <person name="Buhl E.M."/>
            <person name="Hayat S."/>
            <person name="Floege J."/>
            <person name="Strnad P."/>
            <person name="Kramann R."/>
            <person name="Djudjaj S."/>
            <person name="Boor P."/>
        </authorList>
    </citation>
    <scope>FUNCTION</scope>
    <scope>SUBCELLULAR LOCATION</scope>
</reference>
<comment type="function">
    <text evidence="6 7 8">A component of desmosome cell-cell junctions which are required for positive regulation of cellular adhesion (PubMed:38395410). Required for cell-cell adhesion in the epidermis, as a result required for the maintenance of the dermal cohesion and the dermal barrier function (PubMed:18682494). Required for cell-cell adhesion of epithelial cell layers surrounding the telogen hair club, as a result plays an important role in telogen hair shaft anchorage (PubMed:18682494). Essential for successful completion of embryo compaction and development beyond the 8-cell stage (PubMed:16418220).</text>
</comment>
<comment type="subunit">
    <text evidence="2">May form homodimers (By similarity). Interacts with DSG1; there is evidence to suggest that the interaction promotes cell-cell adhesion of keratinocytes (By similarity).</text>
</comment>
<comment type="subcellular location">
    <subcellularLocation>
        <location evidence="6">Cell membrane</location>
        <topology evidence="11">Single-pass type I membrane protein</topology>
    </subcellularLocation>
    <subcellularLocation>
        <location evidence="8">Cell junction</location>
        <location evidence="8">Desmosome</location>
    </subcellularLocation>
    <subcellularLocation>
        <location evidence="6">Cytoplasm</location>
    </subcellularLocation>
    <text evidence="6">Expressed in the cytoplasm and at the cell membrane of oocytes.</text>
</comment>
<comment type="alternative products">
    <event type="alternative splicing"/>
    <isoform>
        <id>P55850-1</id>
        <name>3A</name>
        <sequence type="displayed"/>
    </isoform>
    <isoform>
        <id>P55850-2</id>
        <name>3B</name>
        <sequence type="described" ref="VSP_000665 VSP_000666"/>
    </isoform>
</comment>
<comment type="tissue specificity">
    <text evidence="7 9">Expressed in the basal layers of epidermal stratified epithelia from birth (at protein level).</text>
</comment>
<comment type="developmental stage">
    <text evidence="6 9 10">Expressed in unfertilized oocytes and embryos at the 8-cell stage (2.5 dpc) (PubMed:16418220). Expressed in the trophectoderm of blastocysts (3.5 dpc), also expressed in embryonic ectoderm at 6.5 dpc, expression then increases during embryonic development (PubMed:16418220). Expressed in the early stages of oral, lingual and nasal epithelium development at 12 dpc (PubMed:9404003). Expressed at 13.0 dpc in epithelium of whisker pads and external nares, and in most mature vibrissa follicles (PubMed:9389456, PubMed:9404003). 12 hours later, prominently expressed in whiskers and tactile follicles above the eye (PubMed:9389456). At 14.5 dpc, also expressed in developing nails and teeth and, at low levels, in ventral and lateral skin (PubMed:9389456). Expressed in the inner and outer enamel epithelial of the incisor tooth primorida at 15.5 dpc (PubMed:9404003). At 15.5 dpc, highly expressed in general body epidermis and at 16.5 dpc, detected over entire embryo (PubMed:9389456).</text>
</comment>
<comment type="domain">
    <text evidence="11">Calcium may be bound by the cadherin-like repeats.</text>
</comment>
<comment type="domain">
    <text evidence="1">Three calcium ions are usually bound at the interface of each cadherin domain and rigidify the connections, imparting a strong curvature to the full-length ectodomain.</text>
</comment>
<comment type="disruption phenotype">
    <text evidence="6 7">Knockout is embryonically lethal (PubMed:16418220). Embryos die before compaction is completed at 2.5 dpc (PubMed:16418220). Oocytes and sperm are fully capable of zygote formation (PubMed:16418220). In stratified epithelia conditional knockout mice, 10% of mice develop severe external epidermal blistering which is exacerbated by mild mechanical stress within hours of birth (PubMed:18682494). Affected mice die within a few hours of birth (PubMed:18682494). Intra-epidermal blisters show acantholysis just above the basal cell layer, later stages of acantholysis show lateral separation of basal keratinocytes and at the bottom and roof of the blister half-desmosomes are present (PubMed:18682494). Decrease in mechanical stress resistance as a result of loss of cell-cell adhesion (PubMed:18682494). Mice that do not develop obvious skin lesions at birth grow to adulthood (&gt;3 months) and go on to develop a severe range of skin blisters such as epidermal hyperplasia or complete loss of large sections of epidermis (PubMed:18682494). Inflammation and scaring persists with epithelial tongues in the wound bed showing suprabasal acantholysis (PubMed:18682494). Hair loss on the back is evident at weaning age (21 days), the hair grows back, however patches of hair loss are evident in older mice (PubMed:18682494). Mice loose telogen hair from their backs under mechanical stress, histology shows loss of cell adhesion of the epithelial layers surrounding the telogen hair club (PubMed:18682494).</text>
</comment>
<comment type="sequence caution" evidence="11">
    <conflict type="frameshift">
        <sequence resource="EMBL-CDS" id="CAA72045"/>
    </conflict>
</comment>
<accession>P55850</accession>
<accession>G5E8S6</accession>
<accession>O55110</accession>
<accession>O55122</accession>
<protein>
    <recommendedName>
        <fullName>Desmocollin-3</fullName>
    </recommendedName>
</protein>
<dbReference type="EMBL" id="Y11169">
    <property type="protein sequence ID" value="CAA72045.1"/>
    <property type="status" value="ALT_FRAME"/>
    <property type="molecule type" value="mRNA"/>
</dbReference>
<dbReference type="EMBL" id="AC105159">
    <property type="status" value="NOT_ANNOTATED_CDS"/>
    <property type="molecule type" value="Genomic_DNA"/>
</dbReference>
<dbReference type="EMBL" id="CH466557">
    <property type="protein sequence ID" value="EDK96937.1"/>
    <property type="molecule type" value="Genomic_DNA"/>
</dbReference>
<dbReference type="EMBL" id="AJ000329">
    <property type="protein sequence ID" value="CAA03996.1"/>
    <property type="molecule type" value="mRNA"/>
</dbReference>
<dbReference type="CCDS" id="CCDS37744.1">
    <molecule id="P55850-1"/>
</dbReference>
<dbReference type="CCDS" id="CCDS89197.1">
    <molecule id="P55850-2"/>
</dbReference>
<dbReference type="RefSeq" id="NP_001278738.1">
    <molecule id="P55850-2"/>
    <property type="nucleotide sequence ID" value="NM_001291809.1"/>
</dbReference>
<dbReference type="RefSeq" id="NP_031908.3">
    <molecule id="P55850-1"/>
    <property type="nucleotide sequence ID" value="NM_007882.3"/>
</dbReference>
<dbReference type="RefSeq" id="XP_006525656.1">
    <molecule id="P55850-1"/>
    <property type="nucleotide sequence ID" value="XM_006525593.5"/>
</dbReference>
<dbReference type="SMR" id="P55850"/>
<dbReference type="BioGRID" id="199320">
    <property type="interactions" value="1"/>
</dbReference>
<dbReference type="FunCoup" id="P55850">
    <property type="interactions" value="124"/>
</dbReference>
<dbReference type="STRING" id="10090.ENSMUSP00000153261"/>
<dbReference type="GlyCosmos" id="P55850">
    <property type="glycosylation" value="4 sites, No reported glycans"/>
</dbReference>
<dbReference type="GlyGen" id="P55850">
    <property type="glycosylation" value="4 sites, 2 N-linked glycans (2 sites)"/>
</dbReference>
<dbReference type="iPTMnet" id="P55850"/>
<dbReference type="PhosphoSitePlus" id="P55850"/>
<dbReference type="CPTAC" id="non-CPTAC-4029"/>
<dbReference type="PaxDb" id="10090-ENSMUSP00000111514"/>
<dbReference type="PeptideAtlas" id="P55850"/>
<dbReference type="ProteomicsDB" id="275405">
    <molecule id="P55850-1"/>
</dbReference>
<dbReference type="ProteomicsDB" id="275406">
    <molecule id="P55850-2"/>
</dbReference>
<dbReference type="Antibodypedia" id="7988">
    <property type="antibodies" value="246 antibodies from 33 providers"/>
</dbReference>
<dbReference type="DNASU" id="13507"/>
<dbReference type="Ensembl" id="ENSMUST00000115848.5">
    <molecule id="P55850-2"/>
    <property type="protein sequence ID" value="ENSMUSP00000111514.5"/>
    <property type="gene ID" value="ENSMUSG00000059898.10"/>
</dbReference>
<dbReference type="Ensembl" id="ENSMUST00000225110.2">
    <molecule id="P55850-1"/>
    <property type="protein sequence ID" value="ENSMUSP00000153261.2"/>
    <property type="gene ID" value="ENSMUSG00000059898.10"/>
</dbReference>
<dbReference type="GeneID" id="13507"/>
<dbReference type="KEGG" id="mmu:13507"/>
<dbReference type="UCSC" id="uc008eea.2">
    <property type="organism name" value="mouse"/>
</dbReference>
<dbReference type="AGR" id="MGI:1194993"/>
<dbReference type="CTD" id="1825"/>
<dbReference type="MGI" id="MGI:1194993">
    <property type="gene designation" value="Dsc3"/>
</dbReference>
<dbReference type="VEuPathDB" id="HostDB:ENSMUSG00000059898"/>
<dbReference type="eggNOG" id="KOG3594">
    <property type="taxonomic scope" value="Eukaryota"/>
</dbReference>
<dbReference type="GeneTree" id="ENSGT01030000234624"/>
<dbReference type="InParanoid" id="P55850"/>
<dbReference type="OMA" id="VICKQKM"/>
<dbReference type="OrthoDB" id="6079678at2759"/>
<dbReference type="PhylomeDB" id="P55850"/>
<dbReference type="TreeFam" id="TF316817"/>
<dbReference type="Reactome" id="R-MMU-6805567">
    <property type="pathway name" value="Keratinization"/>
</dbReference>
<dbReference type="Reactome" id="R-MMU-6809371">
    <property type="pathway name" value="Formation of the cornified envelope"/>
</dbReference>
<dbReference type="BioGRID-ORCS" id="13507">
    <property type="hits" value="2 hits in 78 CRISPR screens"/>
</dbReference>
<dbReference type="PRO" id="PR:P55850"/>
<dbReference type="Proteomes" id="UP000000589">
    <property type="component" value="Chromosome 18"/>
</dbReference>
<dbReference type="RNAct" id="P55850">
    <property type="molecule type" value="protein"/>
</dbReference>
<dbReference type="Bgee" id="ENSMUSG00000059898">
    <property type="expression patterns" value="Expressed in tail skin and 105 other cell types or tissues"/>
</dbReference>
<dbReference type="ExpressionAtlas" id="P55850">
    <property type="expression patterns" value="baseline and differential"/>
</dbReference>
<dbReference type="GO" id="GO:0005737">
    <property type="term" value="C:cytoplasm"/>
    <property type="evidence" value="ECO:0000314"/>
    <property type="project" value="MGI"/>
</dbReference>
<dbReference type="GO" id="GO:0030057">
    <property type="term" value="C:desmosome"/>
    <property type="evidence" value="ECO:0000314"/>
    <property type="project" value="UniProtKB"/>
</dbReference>
<dbReference type="GO" id="GO:0005576">
    <property type="term" value="C:extracellular region"/>
    <property type="evidence" value="ECO:0000314"/>
    <property type="project" value="MGI"/>
</dbReference>
<dbReference type="GO" id="GO:0005886">
    <property type="term" value="C:plasma membrane"/>
    <property type="evidence" value="ECO:0000314"/>
    <property type="project" value="MGI"/>
</dbReference>
<dbReference type="GO" id="GO:0005509">
    <property type="term" value="F:calcium ion binding"/>
    <property type="evidence" value="ECO:0007669"/>
    <property type="project" value="InterPro"/>
</dbReference>
<dbReference type="GO" id="GO:0007156">
    <property type="term" value="P:homophilic cell adhesion via plasma membrane adhesion molecules"/>
    <property type="evidence" value="ECO:0007669"/>
    <property type="project" value="InterPro"/>
</dbReference>
<dbReference type="GO" id="GO:0001701">
    <property type="term" value="P:in utero embryonic development"/>
    <property type="evidence" value="ECO:0000315"/>
    <property type="project" value="MGI"/>
</dbReference>
<dbReference type="CDD" id="cd11304">
    <property type="entry name" value="Cadherin_repeat"/>
    <property type="match status" value="3"/>
</dbReference>
<dbReference type="FunFam" id="2.60.40.60:FF:000011">
    <property type="entry name" value="Cadherin 1"/>
    <property type="match status" value="1"/>
</dbReference>
<dbReference type="FunFam" id="2.60.40.60:FF:000019">
    <property type="entry name" value="Cadherin 2"/>
    <property type="match status" value="1"/>
</dbReference>
<dbReference type="FunFam" id="2.60.40.60:FF:000027">
    <property type="entry name" value="Cadherin 2"/>
    <property type="match status" value="1"/>
</dbReference>
<dbReference type="FunFam" id="2.60.40.60:FF:000031">
    <property type="entry name" value="Cadherin 3"/>
    <property type="match status" value="1"/>
</dbReference>
<dbReference type="FunFam" id="2.60.40.60:FF:000091">
    <property type="entry name" value="Desmocollin 1"/>
    <property type="match status" value="1"/>
</dbReference>
<dbReference type="FunFam" id="2.60.40.60:FF:000096">
    <property type="entry name" value="Desmocollin 2"/>
    <property type="match status" value="1"/>
</dbReference>
<dbReference type="FunFam" id="4.10.900.10:FF:000005">
    <property type="entry name" value="Desmocollin 2"/>
    <property type="match status" value="1"/>
</dbReference>
<dbReference type="Gene3D" id="2.60.40.60">
    <property type="entry name" value="Cadherins"/>
    <property type="match status" value="6"/>
</dbReference>
<dbReference type="Gene3D" id="4.10.900.10">
    <property type="entry name" value="TCF3-CBD (Catenin binding domain)"/>
    <property type="match status" value="1"/>
</dbReference>
<dbReference type="InterPro" id="IPR050971">
    <property type="entry name" value="Cadherin-domain_protein"/>
</dbReference>
<dbReference type="InterPro" id="IPR002126">
    <property type="entry name" value="Cadherin-like_dom"/>
</dbReference>
<dbReference type="InterPro" id="IPR015919">
    <property type="entry name" value="Cadherin-like_sf"/>
</dbReference>
<dbReference type="InterPro" id="IPR020894">
    <property type="entry name" value="Cadherin_CS"/>
</dbReference>
<dbReference type="InterPro" id="IPR014868">
    <property type="entry name" value="Cadherin_pro_dom"/>
</dbReference>
<dbReference type="InterPro" id="IPR000233">
    <property type="entry name" value="Cadherin_Y-type_LIR"/>
</dbReference>
<dbReference type="InterPro" id="IPR027397">
    <property type="entry name" value="Catenin-bd_sf"/>
</dbReference>
<dbReference type="InterPro" id="IPR009122">
    <property type="entry name" value="Desmosomal_cadherin"/>
</dbReference>
<dbReference type="PANTHER" id="PTHR24025:SF12">
    <property type="entry name" value="DESMOCOLLIN-3"/>
    <property type="match status" value="1"/>
</dbReference>
<dbReference type="PANTHER" id="PTHR24025">
    <property type="entry name" value="DESMOGLEIN FAMILY MEMBER"/>
    <property type="match status" value="1"/>
</dbReference>
<dbReference type="Pfam" id="PF01049">
    <property type="entry name" value="CADH_Y-type_LIR"/>
    <property type="match status" value="1"/>
</dbReference>
<dbReference type="Pfam" id="PF00028">
    <property type="entry name" value="Cadherin"/>
    <property type="match status" value="4"/>
</dbReference>
<dbReference type="Pfam" id="PF08758">
    <property type="entry name" value="Cadherin_pro"/>
    <property type="match status" value="1"/>
</dbReference>
<dbReference type="PRINTS" id="PR00205">
    <property type="entry name" value="CADHERIN"/>
</dbReference>
<dbReference type="PRINTS" id="PR01818">
    <property type="entry name" value="DESMOCADHERN"/>
</dbReference>
<dbReference type="PRINTS" id="PR01820">
    <property type="entry name" value="DESMOCOLLIN"/>
</dbReference>
<dbReference type="SMART" id="SM00112">
    <property type="entry name" value="CA"/>
    <property type="match status" value="5"/>
</dbReference>
<dbReference type="SMART" id="SM01055">
    <property type="entry name" value="Cadherin_pro"/>
    <property type="match status" value="1"/>
</dbReference>
<dbReference type="SUPFAM" id="SSF49313">
    <property type="entry name" value="Cadherin-like"/>
    <property type="match status" value="6"/>
</dbReference>
<dbReference type="PROSITE" id="PS00232">
    <property type="entry name" value="CADHERIN_1"/>
    <property type="match status" value="3"/>
</dbReference>
<dbReference type="PROSITE" id="PS50268">
    <property type="entry name" value="CADHERIN_2"/>
    <property type="match status" value="5"/>
</dbReference>
<keyword id="KW-0025">Alternative splicing</keyword>
<keyword id="KW-0106">Calcium</keyword>
<keyword id="KW-0130">Cell adhesion</keyword>
<keyword id="KW-0965">Cell junction</keyword>
<keyword id="KW-1003">Cell membrane</keyword>
<keyword id="KW-0165">Cleavage on pair of basic residues</keyword>
<keyword id="KW-0963">Cytoplasm</keyword>
<keyword id="KW-0325">Glycoprotein</keyword>
<keyword id="KW-0472">Membrane</keyword>
<keyword id="KW-0479">Metal-binding</keyword>
<keyword id="KW-1185">Reference proteome</keyword>
<keyword id="KW-0677">Repeat</keyword>
<keyword id="KW-0732">Signal</keyword>
<keyword id="KW-0812">Transmembrane</keyword>
<keyword id="KW-1133">Transmembrane helix</keyword>
<proteinExistence type="evidence at protein level"/>
<sequence>MVVPEFRSPQCRALCTKLLLTLWVFSFVGEACKKVTFHVPSTLEADKIIGRVSLKECLSSADGIMPSDPDFRVLDDGSVYPTRAVVLSDEKRSFTIQLSDSKMQTQKEIPVILEHKKKVLKKRHTKETVLRRSKRRWAPIPCSMQENSLGPFPLFLQQVQSDAAQNYTVFYSISGRGADQEPLNWFFIERDTGNLYCTRPVDREEYDVFDLIAYASTADGYSADLPLPLPIKIEDENDNYPLFTEAIYAFEVPEGSRLGTVVGTVCATDKDEPDTMHTRLKYSILEQTPPSPGLFSVHPDTGVITTVSHYMDREVVDKYKLIMKVQDMNGQFFGLISTSTCIITVQDSNDNAPTFRQNTYETAVEENTYNVEILRIPVDDKDMINTANWKANFTILKGNENGWFKITTDPVTNEGVLCVVKPLDYEENRQVTLEIGVNNEAPFIKDVANRIPTMNRAMVTVHVKDQNEGPECKPPEQYVRIKENSAVGSKINGYKAYDPETKNSNGLRYKKLQDPKDWVSIEEVSGLLTISKTLDREIMAPRNDMYNITVMAIDQEGKSCTGTLAVNIEDVNDNAPEIIQDYIVICKPKMGYTDISAVDPDEPIHGPPFQFNLANTSPEVNRIWTLNQVNDTAARLSYQKTADVQIYNVPVTVKDRAGQSATKILRVNLCDCTHPSQCPLRSRSAGITLGKWAILAILLGIALLFSVLLTLVCGVVTARKGKHFPEDLAQQNLIISNTEAPGDDRVCSANGFTTHTANNSSQGFCGTMGSGMRNGGQETIEMMKGHQTLDSCRVAGHHHTLDSGRGGHMDTDNCRYTYSEWHSFTQPRLGEKLHVCNQNEDHIPSQDYVLTYNYEGRGSPAGSVGCCSEKQEEEGLDFLNNLEPKFLTLAETCTKR</sequence>